<proteinExistence type="inferred from homology"/>
<reference key="1">
    <citation type="journal article" date="2011" name="J. Bacteriol.">
        <title>Complete genome and proteome of Acholeplasma laidlawii.</title>
        <authorList>
            <person name="Lazarev V.N."/>
            <person name="Levitskii S.A."/>
            <person name="Basovskii Y.I."/>
            <person name="Chukin M.M."/>
            <person name="Akopian T.A."/>
            <person name="Vereshchagin V.V."/>
            <person name="Kostrjukova E.S."/>
            <person name="Kovaleva G.Y."/>
            <person name="Kazanov M.D."/>
            <person name="Malko D.B."/>
            <person name="Vitreschak A.G."/>
            <person name="Sernova N.V."/>
            <person name="Gelfand M.S."/>
            <person name="Demina I.A."/>
            <person name="Serebryakova M.V."/>
            <person name="Galyamina M.A."/>
            <person name="Vtyurin N.N."/>
            <person name="Rogov S.I."/>
            <person name="Alexeev D.G."/>
            <person name="Ladygina V.G."/>
            <person name="Govorun V.M."/>
        </authorList>
    </citation>
    <scope>NUCLEOTIDE SEQUENCE [LARGE SCALE GENOMIC DNA]</scope>
    <source>
        <strain>PG-8A</strain>
    </source>
</reference>
<dbReference type="EMBL" id="CP000896">
    <property type="protein sequence ID" value="ABX81514.1"/>
    <property type="molecule type" value="Genomic_DNA"/>
</dbReference>
<dbReference type="RefSeq" id="WP_012242845.1">
    <property type="nucleotide sequence ID" value="NC_010163.1"/>
</dbReference>
<dbReference type="SMR" id="A9NGN4"/>
<dbReference type="STRING" id="441768.ACL_0901"/>
<dbReference type="GeneID" id="41339054"/>
<dbReference type="KEGG" id="acl:ACL_0901"/>
<dbReference type="eggNOG" id="COG0782">
    <property type="taxonomic scope" value="Bacteria"/>
</dbReference>
<dbReference type="HOGENOM" id="CLU_101379_2_0_14"/>
<dbReference type="OrthoDB" id="9808774at2"/>
<dbReference type="Proteomes" id="UP000008558">
    <property type="component" value="Chromosome"/>
</dbReference>
<dbReference type="GO" id="GO:0003677">
    <property type="term" value="F:DNA binding"/>
    <property type="evidence" value="ECO:0007669"/>
    <property type="project" value="UniProtKB-UniRule"/>
</dbReference>
<dbReference type="GO" id="GO:0070063">
    <property type="term" value="F:RNA polymerase binding"/>
    <property type="evidence" value="ECO:0007669"/>
    <property type="project" value="InterPro"/>
</dbReference>
<dbReference type="GO" id="GO:0006354">
    <property type="term" value="P:DNA-templated transcription elongation"/>
    <property type="evidence" value="ECO:0007669"/>
    <property type="project" value="TreeGrafter"/>
</dbReference>
<dbReference type="GO" id="GO:0032784">
    <property type="term" value="P:regulation of DNA-templated transcription elongation"/>
    <property type="evidence" value="ECO:0007669"/>
    <property type="project" value="UniProtKB-UniRule"/>
</dbReference>
<dbReference type="FunFam" id="1.10.287.180:FF:000001">
    <property type="entry name" value="Transcription elongation factor GreA"/>
    <property type="match status" value="1"/>
</dbReference>
<dbReference type="Gene3D" id="3.10.50.30">
    <property type="entry name" value="Transcription elongation factor, GreA/GreB, C-terminal domain"/>
    <property type="match status" value="1"/>
</dbReference>
<dbReference type="Gene3D" id="1.10.287.180">
    <property type="entry name" value="Transcription elongation factor, GreA/GreB, N-terminal domain"/>
    <property type="match status" value="1"/>
</dbReference>
<dbReference type="HAMAP" id="MF_00105">
    <property type="entry name" value="GreA_GreB"/>
    <property type="match status" value="1"/>
</dbReference>
<dbReference type="InterPro" id="IPR036953">
    <property type="entry name" value="GreA/GreB_C_sf"/>
</dbReference>
<dbReference type="InterPro" id="IPR018151">
    <property type="entry name" value="TF_GreA/GreB_CS"/>
</dbReference>
<dbReference type="InterPro" id="IPR006359">
    <property type="entry name" value="Tscrpt_elong_fac_GreA"/>
</dbReference>
<dbReference type="InterPro" id="IPR028624">
    <property type="entry name" value="Tscrpt_elong_fac_GreA/B"/>
</dbReference>
<dbReference type="InterPro" id="IPR001437">
    <property type="entry name" value="Tscrpt_elong_fac_GreA/B_C"/>
</dbReference>
<dbReference type="InterPro" id="IPR023459">
    <property type="entry name" value="Tscrpt_elong_fac_GreA/B_fam"/>
</dbReference>
<dbReference type="InterPro" id="IPR022691">
    <property type="entry name" value="Tscrpt_elong_fac_GreA/B_N"/>
</dbReference>
<dbReference type="InterPro" id="IPR036805">
    <property type="entry name" value="Tscrpt_elong_fac_GreA/B_N_sf"/>
</dbReference>
<dbReference type="NCBIfam" id="TIGR01462">
    <property type="entry name" value="greA"/>
    <property type="match status" value="1"/>
</dbReference>
<dbReference type="NCBIfam" id="NF001263">
    <property type="entry name" value="PRK00226.1-4"/>
    <property type="match status" value="1"/>
</dbReference>
<dbReference type="PANTHER" id="PTHR30437">
    <property type="entry name" value="TRANSCRIPTION ELONGATION FACTOR GREA"/>
    <property type="match status" value="1"/>
</dbReference>
<dbReference type="PANTHER" id="PTHR30437:SF4">
    <property type="entry name" value="TRANSCRIPTION ELONGATION FACTOR GREA"/>
    <property type="match status" value="1"/>
</dbReference>
<dbReference type="Pfam" id="PF01272">
    <property type="entry name" value="GreA_GreB"/>
    <property type="match status" value="1"/>
</dbReference>
<dbReference type="Pfam" id="PF03449">
    <property type="entry name" value="GreA_GreB_N"/>
    <property type="match status" value="1"/>
</dbReference>
<dbReference type="PIRSF" id="PIRSF006092">
    <property type="entry name" value="GreA_GreB"/>
    <property type="match status" value="1"/>
</dbReference>
<dbReference type="SUPFAM" id="SSF54534">
    <property type="entry name" value="FKBP-like"/>
    <property type="match status" value="1"/>
</dbReference>
<dbReference type="SUPFAM" id="SSF46557">
    <property type="entry name" value="GreA transcript cleavage protein, N-terminal domain"/>
    <property type="match status" value="1"/>
</dbReference>
<dbReference type="PROSITE" id="PS00829">
    <property type="entry name" value="GREAB_1"/>
    <property type="match status" value="1"/>
</dbReference>
<gene>
    <name evidence="1" type="primary">greA</name>
    <name type="ordered locus">ACL_0901</name>
</gene>
<accession>A9NGN4</accession>
<protein>
    <recommendedName>
        <fullName evidence="1">Transcription elongation factor GreA</fullName>
    </recommendedName>
    <alternativeName>
        <fullName evidence="1">Transcript cleavage factor GreA</fullName>
    </alternativeName>
</protein>
<evidence type="ECO:0000255" key="1">
    <source>
        <dbReference type="HAMAP-Rule" id="MF_00105"/>
    </source>
</evidence>
<comment type="function">
    <text evidence="1">Necessary for efficient RNA polymerase transcription elongation past template-encoded arresting sites. The arresting sites in DNA have the property of trapping a certain fraction of elongating RNA polymerases that pass through, resulting in locked ternary complexes. Cleavage of the nascent transcript by cleavage factors such as GreA or GreB allows the resumption of elongation from the new 3'terminus. GreA releases sequences of 2 to 3 nucleotides.</text>
</comment>
<comment type="similarity">
    <text evidence="1">Belongs to the GreA/GreB family.</text>
</comment>
<sequence>MASKKVYELTQSGLDQLKDELTHLKDVKRVENLEALKEAREQGDLSENADYDAARNEQARIEARILEIESILKNVKIIRTNDDSTTVNIGKKVLLHFVEKNKDVEYHVVGTIEADPKNFKISIESPLGRAIKGKEVGDLVQIKSATNKQSNVEIKAIS</sequence>
<feature type="chain" id="PRO_1000094145" description="Transcription elongation factor GreA">
    <location>
        <begin position="1"/>
        <end position="158"/>
    </location>
</feature>
<feature type="coiled-coil region" evidence="1">
    <location>
        <begin position="14"/>
        <end position="76"/>
    </location>
</feature>
<name>GREA_ACHLI</name>
<organism>
    <name type="scientific">Acholeplasma laidlawii (strain PG-8A)</name>
    <dbReference type="NCBI Taxonomy" id="441768"/>
    <lineage>
        <taxon>Bacteria</taxon>
        <taxon>Bacillati</taxon>
        <taxon>Mycoplasmatota</taxon>
        <taxon>Mollicutes</taxon>
        <taxon>Acholeplasmatales</taxon>
        <taxon>Acholeplasmataceae</taxon>
        <taxon>Acholeplasma</taxon>
    </lineage>
</organism>
<keyword id="KW-0175">Coiled coil</keyword>
<keyword id="KW-0238">DNA-binding</keyword>
<keyword id="KW-1185">Reference proteome</keyword>
<keyword id="KW-0804">Transcription</keyword>
<keyword id="KW-0805">Transcription regulation</keyword>